<keyword id="KW-0560">Oxidoreductase</keyword>
<keyword id="KW-1185">Reference proteome</keyword>
<feature type="chain" id="PRO_0000091786" description="Uncharacterized oxidoreductase sll0816">
    <location>
        <begin position="1"/>
        <end position="371"/>
    </location>
</feature>
<dbReference type="EC" id="1.-.-.-"/>
<dbReference type="EMBL" id="BA000022">
    <property type="protein sequence ID" value="BAA18116.1"/>
    <property type="molecule type" value="Genomic_DNA"/>
</dbReference>
<dbReference type="PIR" id="S75555">
    <property type="entry name" value="S75555"/>
</dbReference>
<dbReference type="SMR" id="P74041"/>
<dbReference type="FunCoup" id="P74041">
    <property type="interactions" value="9"/>
</dbReference>
<dbReference type="STRING" id="1148.gene:10498987"/>
<dbReference type="PaxDb" id="1148-1653200"/>
<dbReference type="EnsemblBacteria" id="BAA18116">
    <property type="protein sequence ID" value="BAA18116"/>
    <property type="gene ID" value="BAA18116"/>
</dbReference>
<dbReference type="KEGG" id="syn:sll0816"/>
<dbReference type="eggNOG" id="COG0673">
    <property type="taxonomic scope" value="Bacteria"/>
</dbReference>
<dbReference type="InParanoid" id="P74041"/>
<dbReference type="PhylomeDB" id="P74041"/>
<dbReference type="Proteomes" id="UP000001425">
    <property type="component" value="Chromosome"/>
</dbReference>
<dbReference type="GO" id="GO:0000166">
    <property type="term" value="F:nucleotide binding"/>
    <property type="evidence" value="ECO:0007669"/>
    <property type="project" value="InterPro"/>
</dbReference>
<dbReference type="GO" id="GO:0016491">
    <property type="term" value="F:oxidoreductase activity"/>
    <property type="evidence" value="ECO:0007669"/>
    <property type="project" value="UniProtKB-KW"/>
</dbReference>
<dbReference type="Gene3D" id="3.30.360.10">
    <property type="entry name" value="Dihydrodipicolinate Reductase, domain 2"/>
    <property type="match status" value="1"/>
</dbReference>
<dbReference type="Gene3D" id="3.40.50.720">
    <property type="entry name" value="NAD(P)-binding Rossmann-like Domain"/>
    <property type="match status" value="1"/>
</dbReference>
<dbReference type="InterPro" id="IPR004104">
    <property type="entry name" value="Gfo/Idh/MocA-like_OxRdtase_C"/>
</dbReference>
<dbReference type="InterPro" id="IPR000683">
    <property type="entry name" value="Gfo/Idh/MocA-like_OxRdtase_N"/>
</dbReference>
<dbReference type="InterPro" id="IPR050463">
    <property type="entry name" value="Gfo/Idh/MocA_oxidrdct_glycsds"/>
</dbReference>
<dbReference type="InterPro" id="IPR036291">
    <property type="entry name" value="NAD(P)-bd_dom_sf"/>
</dbReference>
<dbReference type="PANTHER" id="PTHR43818">
    <property type="entry name" value="BCDNA.GH03377"/>
    <property type="match status" value="1"/>
</dbReference>
<dbReference type="PANTHER" id="PTHR43818:SF11">
    <property type="entry name" value="BCDNA.GH03377"/>
    <property type="match status" value="1"/>
</dbReference>
<dbReference type="Pfam" id="PF01408">
    <property type="entry name" value="GFO_IDH_MocA"/>
    <property type="match status" value="1"/>
</dbReference>
<dbReference type="Pfam" id="PF02894">
    <property type="entry name" value="GFO_IDH_MocA_C"/>
    <property type="match status" value="1"/>
</dbReference>
<dbReference type="SUPFAM" id="SSF55347">
    <property type="entry name" value="Glyceraldehyde-3-phosphate dehydrogenase-like, C-terminal domain"/>
    <property type="match status" value="1"/>
</dbReference>
<dbReference type="SUPFAM" id="SSF51735">
    <property type="entry name" value="NAD(P)-binding Rossmann-fold domains"/>
    <property type="match status" value="1"/>
</dbReference>
<accession>P74041</accession>
<name>Y816_SYNY3</name>
<evidence type="ECO:0000305" key="1"/>
<gene>
    <name type="ordered locus">sll0816</name>
</gene>
<proteinExistence type="inferred from homology"/>
<comment type="similarity">
    <text evidence="1">Belongs to the Gfo/Idh/MocA family.</text>
</comment>
<organism>
    <name type="scientific">Synechocystis sp. (strain ATCC 27184 / PCC 6803 / Kazusa)</name>
    <dbReference type="NCBI Taxonomy" id="1111708"/>
    <lineage>
        <taxon>Bacteria</taxon>
        <taxon>Bacillati</taxon>
        <taxon>Cyanobacteriota</taxon>
        <taxon>Cyanophyceae</taxon>
        <taxon>Synechococcales</taxon>
        <taxon>Merismopediaceae</taxon>
        <taxon>Synechocystis</taxon>
    </lineage>
</organism>
<reference key="1">
    <citation type="journal article" date="1996" name="DNA Res.">
        <title>Sequence analysis of the genome of the unicellular cyanobacterium Synechocystis sp. strain PCC6803. II. Sequence determination of the entire genome and assignment of potential protein-coding regions.</title>
        <authorList>
            <person name="Kaneko T."/>
            <person name="Sato S."/>
            <person name="Kotani H."/>
            <person name="Tanaka A."/>
            <person name="Asamizu E."/>
            <person name="Nakamura Y."/>
            <person name="Miyajima N."/>
            <person name="Hirosawa M."/>
            <person name="Sugiura M."/>
            <person name="Sasamoto S."/>
            <person name="Kimura T."/>
            <person name="Hosouchi T."/>
            <person name="Matsuno A."/>
            <person name="Muraki A."/>
            <person name="Nakazaki N."/>
            <person name="Naruo K."/>
            <person name="Okumura S."/>
            <person name="Shimpo S."/>
            <person name="Takeuchi C."/>
            <person name="Wada T."/>
            <person name="Watanabe A."/>
            <person name="Yamada M."/>
            <person name="Yasuda M."/>
            <person name="Tabata S."/>
        </authorList>
    </citation>
    <scope>NUCLEOTIDE SEQUENCE [LARGE SCALE GENOMIC DNA]</scope>
    <source>
        <strain>ATCC 27184 / PCC 6803 / Kazusa</strain>
    </source>
</reference>
<sequence length="371" mass="41490">MTKSPNLTVAVIGTGFGQAVHIPALQYHQQTQAIAIYHRDLAKAQEVAKSNDLAYSYNNLEELLANPEVQAVTIASPPFLHYEMAKQAILAGKHVLLEKPMTLRVEETIELYHLARQREVQVIPDFEFRFVPAWQYVAELLGQGILGQLKLIKVDWLVGSRANPNRAWNWYAQREKGGGALGALASHTFDYLHWLFGPAQSLAANLSVAIAERPDPLDNNRLKPVTAEDTALISLTLANDVPCQINITSVAHGGRGHWLEIYGEKGSLVLGSDNLKDYVHGFRIFHHPVGQPMQELTVPTRLDFPKVFADGRLAPVVRVVDEWVQSINQKRTPTPSLRHGVYSQLLMDLTKQAHQEKHWVAVPDLDRLLAQ</sequence>
<protein>
    <recommendedName>
        <fullName>Uncharacterized oxidoreductase sll0816</fullName>
        <ecNumber>1.-.-.-</ecNumber>
    </recommendedName>
</protein>